<comment type="function">
    <text evidence="1">Covalently attaches a chromophore to Cys residue(s) of phycobiliproteins.</text>
</comment>
<comment type="similarity">
    <text evidence="1">Belongs to the CpcT/CpeT biliprotein lyase family.</text>
</comment>
<organism>
    <name type="scientific">Prochlorococcus marinus (strain NATL1A)</name>
    <dbReference type="NCBI Taxonomy" id="167555"/>
    <lineage>
        <taxon>Bacteria</taxon>
        <taxon>Bacillati</taxon>
        <taxon>Cyanobacteriota</taxon>
        <taxon>Cyanophyceae</taxon>
        <taxon>Synechococcales</taxon>
        <taxon>Prochlorococcaceae</taxon>
        <taxon>Prochlorococcus</taxon>
    </lineage>
</organism>
<name>CPXT_PROM1</name>
<proteinExistence type="inferred from homology"/>
<evidence type="ECO:0000255" key="1">
    <source>
        <dbReference type="HAMAP-Rule" id="MF_01460"/>
    </source>
</evidence>
<feature type="chain" id="PRO_0000403162" description="Chromophore lyase CpcT/CpeT">
    <location>
        <begin position="1"/>
        <end position="199"/>
    </location>
</feature>
<protein>
    <recommendedName>
        <fullName evidence="1">Chromophore lyase CpcT/CpeT</fullName>
        <ecNumber evidence="1">4.-.-.-</ecNumber>
    </recommendedName>
</protein>
<keyword id="KW-0456">Lyase</keyword>
<sequence>MKKKPTLEFAKIVSGVFSNKEQALNNPKKFAHIQIHIRPLFFKTYNCFAFYSEQRYQHDIWNPYRQSINKLSQEEEIFIFSNYKIEDKERFTGGALDISLLDKISKYKLYKKPGCSMYFKETNPGNFLGTIESGCKCFIEYGSDKTYVKSKVTVNKNILISEDSGYAIETDKKVWGSEFGPLIFKKIINFDCFINEYWK</sequence>
<dbReference type="EC" id="4.-.-.-" evidence="1"/>
<dbReference type="EMBL" id="CP000553">
    <property type="protein sequence ID" value="ABM74954.1"/>
    <property type="molecule type" value="Genomic_DNA"/>
</dbReference>
<dbReference type="RefSeq" id="WP_011823151.1">
    <property type="nucleotide sequence ID" value="NC_008819.1"/>
</dbReference>
<dbReference type="SMR" id="A2C0E4"/>
<dbReference type="KEGG" id="pme:NATL1_03901"/>
<dbReference type="eggNOG" id="ENOG502Z8CK">
    <property type="taxonomic scope" value="Bacteria"/>
</dbReference>
<dbReference type="HOGENOM" id="CLU_092589_0_0_3"/>
<dbReference type="Proteomes" id="UP000002592">
    <property type="component" value="Chromosome"/>
</dbReference>
<dbReference type="GO" id="GO:0016829">
    <property type="term" value="F:lyase activity"/>
    <property type="evidence" value="ECO:0007669"/>
    <property type="project" value="UniProtKB-KW"/>
</dbReference>
<dbReference type="CDD" id="cd16338">
    <property type="entry name" value="CpcT"/>
    <property type="match status" value="1"/>
</dbReference>
<dbReference type="Gene3D" id="2.40.128.590">
    <property type="entry name" value="CpcT/CpeT domain"/>
    <property type="match status" value="1"/>
</dbReference>
<dbReference type="HAMAP" id="MF_01460">
    <property type="entry name" value="Chrphore_lyase_CpxT"/>
    <property type="match status" value="1"/>
</dbReference>
<dbReference type="InterPro" id="IPR010404">
    <property type="entry name" value="CpcT/CpeT"/>
</dbReference>
<dbReference type="InterPro" id="IPR038672">
    <property type="entry name" value="CpcT/CpeT_sf"/>
</dbReference>
<dbReference type="PANTHER" id="PTHR35137">
    <property type="entry name" value="CHROMOPHORE LYASE CRL, CHLOROPLASTIC"/>
    <property type="match status" value="1"/>
</dbReference>
<dbReference type="PANTHER" id="PTHR35137:SF1">
    <property type="entry name" value="CHROMOPHORE LYASE CRL, CHLOROPLASTIC"/>
    <property type="match status" value="1"/>
</dbReference>
<dbReference type="Pfam" id="PF06206">
    <property type="entry name" value="CpeT"/>
    <property type="match status" value="1"/>
</dbReference>
<reference key="1">
    <citation type="journal article" date="2007" name="PLoS Genet.">
        <title>Patterns and implications of gene gain and loss in the evolution of Prochlorococcus.</title>
        <authorList>
            <person name="Kettler G.C."/>
            <person name="Martiny A.C."/>
            <person name="Huang K."/>
            <person name="Zucker J."/>
            <person name="Coleman M.L."/>
            <person name="Rodrigue S."/>
            <person name="Chen F."/>
            <person name="Lapidus A."/>
            <person name="Ferriera S."/>
            <person name="Johnson J."/>
            <person name="Steglich C."/>
            <person name="Church G.M."/>
            <person name="Richardson P."/>
            <person name="Chisholm S.W."/>
        </authorList>
    </citation>
    <scope>NUCLEOTIDE SEQUENCE [LARGE SCALE GENOMIC DNA]</scope>
    <source>
        <strain>NATL1A</strain>
    </source>
</reference>
<accession>A2C0E4</accession>
<gene>
    <name evidence="1" type="primary">cpcT</name>
    <name type="ordered locus">NATL1_03901</name>
</gene>